<name>GPDA_AGARV</name>
<reference key="1">
    <citation type="journal article" date="2009" name="Proc. Natl. Acad. Sci. U.S.A.">
        <title>Characterizing a model human gut microbiota composed of members of its two dominant bacterial phyla.</title>
        <authorList>
            <person name="Mahowald M.A."/>
            <person name="Rey F.E."/>
            <person name="Seedorf H."/>
            <person name="Turnbaugh P.J."/>
            <person name="Fulton R.S."/>
            <person name="Wollam A."/>
            <person name="Shah N."/>
            <person name="Wang C."/>
            <person name="Magrini V."/>
            <person name="Wilson R.K."/>
            <person name="Cantarel B.L."/>
            <person name="Coutinho P.M."/>
            <person name="Henrissat B."/>
            <person name="Crock L.W."/>
            <person name="Russell A."/>
            <person name="Verberkmoes N.C."/>
            <person name="Hettich R.L."/>
            <person name="Gordon J.I."/>
        </authorList>
    </citation>
    <scope>NUCLEOTIDE SEQUENCE [LARGE SCALE GENOMIC DNA]</scope>
    <source>
        <strain>ATCC 33656 / DSM 3377 / JCM 17463 / KCTC 5835 / LMG 30912 / VPI 0990</strain>
    </source>
</reference>
<dbReference type="EC" id="1.1.1.94" evidence="1"/>
<dbReference type="EMBL" id="CP001107">
    <property type="protein sequence ID" value="ACR76024.1"/>
    <property type="molecule type" value="Genomic_DNA"/>
</dbReference>
<dbReference type="RefSeq" id="WP_012743119.1">
    <property type="nucleotide sequence ID" value="NC_012781.1"/>
</dbReference>
<dbReference type="SMR" id="C4ZD61"/>
<dbReference type="STRING" id="515619.EUBREC_2285"/>
<dbReference type="PaxDb" id="515619-EUBREC_2285"/>
<dbReference type="GeneID" id="86989057"/>
<dbReference type="KEGG" id="ere:EUBREC_2285"/>
<dbReference type="HOGENOM" id="CLU_033449_0_2_9"/>
<dbReference type="UniPathway" id="UPA00940"/>
<dbReference type="Proteomes" id="UP000001477">
    <property type="component" value="Chromosome"/>
</dbReference>
<dbReference type="GO" id="GO:0005829">
    <property type="term" value="C:cytosol"/>
    <property type="evidence" value="ECO:0007669"/>
    <property type="project" value="TreeGrafter"/>
</dbReference>
<dbReference type="GO" id="GO:0047952">
    <property type="term" value="F:glycerol-3-phosphate dehydrogenase [NAD(P)+] activity"/>
    <property type="evidence" value="ECO:0007669"/>
    <property type="project" value="UniProtKB-UniRule"/>
</dbReference>
<dbReference type="GO" id="GO:0051287">
    <property type="term" value="F:NAD binding"/>
    <property type="evidence" value="ECO:0007669"/>
    <property type="project" value="InterPro"/>
</dbReference>
<dbReference type="GO" id="GO:0005975">
    <property type="term" value="P:carbohydrate metabolic process"/>
    <property type="evidence" value="ECO:0007669"/>
    <property type="project" value="InterPro"/>
</dbReference>
<dbReference type="GO" id="GO:0046167">
    <property type="term" value="P:glycerol-3-phosphate biosynthetic process"/>
    <property type="evidence" value="ECO:0007669"/>
    <property type="project" value="UniProtKB-UniRule"/>
</dbReference>
<dbReference type="GO" id="GO:0046168">
    <property type="term" value="P:glycerol-3-phosphate catabolic process"/>
    <property type="evidence" value="ECO:0007669"/>
    <property type="project" value="InterPro"/>
</dbReference>
<dbReference type="GO" id="GO:0006650">
    <property type="term" value="P:glycerophospholipid metabolic process"/>
    <property type="evidence" value="ECO:0007669"/>
    <property type="project" value="UniProtKB-UniRule"/>
</dbReference>
<dbReference type="GO" id="GO:0008654">
    <property type="term" value="P:phospholipid biosynthetic process"/>
    <property type="evidence" value="ECO:0007669"/>
    <property type="project" value="UniProtKB-KW"/>
</dbReference>
<dbReference type="FunFam" id="1.10.1040.10:FF:000001">
    <property type="entry name" value="Glycerol-3-phosphate dehydrogenase [NAD(P)+]"/>
    <property type="match status" value="1"/>
</dbReference>
<dbReference type="FunFam" id="3.40.50.720:FF:000019">
    <property type="entry name" value="Glycerol-3-phosphate dehydrogenase [NAD(P)+]"/>
    <property type="match status" value="1"/>
</dbReference>
<dbReference type="Gene3D" id="1.10.1040.10">
    <property type="entry name" value="N-(1-d-carboxylethyl)-l-norvaline Dehydrogenase, domain 2"/>
    <property type="match status" value="1"/>
</dbReference>
<dbReference type="Gene3D" id="3.40.50.720">
    <property type="entry name" value="NAD(P)-binding Rossmann-like Domain"/>
    <property type="match status" value="1"/>
</dbReference>
<dbReference type="HAMAP" id="MF_00394">
    <property type="entry name" value="NAD_Glyc3P_dehydrog"/>
    <property type="match status" value="1"/>
</dbReference>
<dbReference type="InterPro" id="IPR008927">
    <property type="entry name" value="6-PGluconate_DH-like_C_sf"/>
</dbReference>
<dbReference type="InterPro" id="IPR013328">
    <property type="entry name" value="6PGD_dom2"/>
</dbReference>
<dbReference type="InterPro" id="IPR006168">
    <property type="entry name" value="G3P_DH_NAD-dep"/>
</dbReference>
<dbReference type="InterPro" id="IPR006109">
    <property type="entry name" value="G3P_DH_NAD-dep_C"/>
</dbReference>
<dbReference type="InterPro" id="IPR011128">
    <property type="entry name" value="G3P_DH_NAD-dep_N"/>
</dbReference>
<dbReference type="InterPro" id="IPR036291">
    <property type="entry name" value="NAD(P)-bd_dom_sf"/>
</dbReference>
<dbReference type="NCBIfam" id="NF000940">
    <property type="entry name" value="PRK00094.1-2"/>
    <property type="match status" value="1"/>
</dbReference>
<dbReference type="NCBIfam" id="NF000942">
    <property type="entry name" value="PRK00094.1-4"/>
    <property type="match status" value="1"/>
</dbReference>
<dbReference type="PANTHER" id="PTHR11728">
    <property type="entry name" value="GLYCEROL-3-PHOSPHATE DEHYDROGENASE"/>
    <property type="match status" value="1"/>
</dbReference>
<dbReference type="PANTHER" id="PTHR11728:SF1">
    <property type="entry name" value="GLYCEROL-3-PHOSPHATE DEHYDROGENASE [NAD(+)] 2, CHLOROPLASTIC"/>
    <property type="match status" value="1"/>
</dbReference>
<dbReference type="Pfam" id="PF07479">
    <property type="entry name" value="NAD_Gly3P_dh_C"/>
    <property type="match status" value="1"/>
</dbReference>
<dbReference type="Pfam" id="PF01210">
    <property type="entry name" value="NAD_Gly3P_dh_N"/>
    <property type="match status" value="1"/>
</dbReference>
<dbReference type="PIRSF" id="PIRSF000114">
    <property type="entry name" value="Glycerol-3-P_dh"/>
    <property type="match status" value="1"/>
</dbReference>
<dbReference type="PRINTS" id="PR00077">
    <property type="entry name" value="GPDHDRGNASE"/>
</dbReference>
<dbReference type="SUPFAM" id="SSF48179">
    <property type="entry name" value="6-phosphogluconate dehydrogenase C-terminal domain-like"/>
    <property type="match status" value="1"/>
</dbReference>
<dbReference type="SUPFAM" id="SSF51735">
    <property type="entry name" value="NAD(P)-binding Rossmann-fold domains"/>
    <property type="match status" value="1"/>
</dbReference>
<dbReference type="PROSITE" id="PS00957">
    <property type="entry name" value="NAD_G3PDH"/>
    <property type="match status" value="1"/>
</dbReference>
<gene>
    <name evidence="1" type="primary">gpsA</name>
    <name type="ordered locus">EUBREC_2285</name>
</gene>
<organism>
    <name type="scientific">Agathobacter rectalis (strain ATCC 33656 / DSM 3377 / JCM 17463 / KCTC 5835 / VPI 0990)</name>
    <name type="common">Eubacterium rectale</name>
    <dbReference type="NCBI Taxonomy" id="515619"/>
    <lineage>
        <taxon>Bacteria</taxon>
        <taxon>Bacillati</taxon>
        <taxon>Bacillota</taxon>
        <taxon>Clostridia</taxon>
        <taxon>Lachnospirales</taxon>
        <taxon>Lachnospiraceae</taxon>
        <taxon>Agathobacter</taxon>
    </lineage>
</organism>
<feature type="chain" id="PRO_1000205859" description="Glycerol-3-phosphate dehydrogenase [NAD(P)+]">
    <location>
        <begin position="1"/>
        <end position="336"/>
    </location>
</feature>
<feature type="active site" description="Proton acceptor" evidence="1">
    <location>
        <position position="189"/>
    </location>
</feature>
<feature type="binding site" evidence="1">
    <location>
        <position position="11"/>
    </location>
    <ligand>
        <name>NADPH</name>
        <dbReference type="ChEBI" id="CHEBI:57783"/>
    </ligand>
</feature>
<feature type="binding site" evidence="1">
    <location>
        <position position="12"/>
    </location>
    <ligand>
        <name>NADPH</name>
        <dbReference type="ChEBI" id="CHEBI:57783"/>
    </ligand>
</feature>
<feature type="binding site" evidence="1">
    <location>
        <position position="106"/>
    </location>
    <ligand>
        <name>NADPH</name>
        <dbReference type="ChEBI" id="CHEBI:57783"/>
    </ligand>
</feature>
<feature type="binding site" evidence="1">
    <location>
        <position position="106"/>
    </location>
    <ligand>
        <name>sn-glycerol 3-phosphate</name>
        <dbReference type="ChEBI" id="CHEBI:57597"/>
    </ligand>
</feature>
<feature type="binding site" evidence="1">
    <location>
        <position position="134"/>
    </location>
    <ligand>
        <name>sn-glycerol 3-phosphate</name>
        <dbReference type="ChEBI" id="CHEBI:57597"/>
    </ligand>
</feature>
<feature type="binding site" evidence="1">
    <location>
        <position position="136"/>
    </location>
    <ligand>
        <name>sn-glycerol 3-phosphate</name>
        <dbReference type="ChEBI" id="CHEBI:57597"/>
    </ligand>
</feature>
<feature type="binding site" evidence="1">
    <location>
        <position position="138"/>
    </location>
    <ligand>
        <name>NADPH</name>
        <dbReference type="ChEBI" id="CHEBI:57783"/>
    </ligand>
</feature>
<feature type="binding site" evidence="1">
    <location>
        <position position="189"/>
    </location>
    <ligand>
        <name>sn-glycerol 3-phosphate</name>
        <dbReference type="ChEBI" id="CHEBI:57597"/>
    </ligand>
</feature>
<feature type="binding site" evidence="1">
    <location>
        <position position="242"/>
    </location>
    <ligand>
        <name>sn-glycerol 3-phosphate</name>
        <dbReference type="ChEBI" id="CHEBI:57597"/>
    </ligand>
</feature>
<feature type="binding site" evidence="1">
    <location>
        <position position="252"/>
    </location>
    <ligand>
        <name>sn-glycerol 3-phosphate</name>
        <dbReference type="ChEBI" id="CHEBI:57597"/>
    </ligand>
</feature>
<feature type="binding site" evidence="1">
    <location>
        <position position="253"/>
    </location>
    <ligand>
        <name>NADPH</name>
        <dbReference type="ChEBI" id="CHEBI:57783"/>
    </ligand>
</feature>
<feature type="binding site" evidence="1">
    <location>
        <position position="253"/>
    </location>
    <ligand>
        <name>sn-glycerol 3-phosphate</name>
        <dbReference type="ChEBI" id="CHEBI:57597"/>
    </ligand>
</feature>
<feature type="binding site" evidence="1">
    <location>
        <position position="254"/>
    </location>
    <ligand>
        <name>sn-glycerol 3-phosphate</name>
        <dbReference type="ChEBI" id="CHEBI:57597"/>
    </ligand>
</feature>
<feature type="binding site" evidence="1">
    <location>
        <position position="277"/>
    </location>
    <ligand>
        <name>NADPH</name>
        <dbReference type="ChEBI" id="CHEBI:57783"/>
    </ligand>
</feature>
<feature type="binding site" evidence="1">
    <location>
        <position position="279"/>
    </location>
    <ligand>
        <name>NADPH</name>
        <dbReference type="ChEBI" id="CHEBI:57783"/>
    </ligand>
</feature>
<evidence type="ECO:0000255" key="1">
    <source>
        <dbReference type="HAMAP-Rule" id="MF_00394"/>
    </source>
</evidence>
<comment type="function">
    <text evidence="1">Catalyzes the reduction of the glycolytic intermediate dihydroxyacetone phosphate (DHAP) to sn-glycerol 3-phosphate (G3P), the key precursor for phospholipid synthesis.</text>
</comment>
<comment type="catalytic activity">
    <reaction evidence="1">
        <text>sn-glycerol 3-phosphate + NAD(+) = dihydroxyacetone phosphate + NADH + H(+)</text>
        <dbReference type="Rhea" id="RHEA:11092"/>
        <dbReference type="ChEBI" id="CHEBI:15378"/>
        <dbReference type="ChEBI" id="CHEBI:57540"/>
        <dbReference type="ChEBI" id="CHEBI:57597"/>
        <dbReference type="ChEBI" id="CHEBI:57642"/>
        <dbReference type="ChEBI" id="CHEBI:57945"/>
        <dbReference type="EC" id="1.1.1.94"/>
    </reaction>
    <physiologicalReaction direction="right-to-left" evidence="1">
        <dbReference type="Rhea" id="RHEA:11094"/>
    </physiologicalReaction>
</comment>
<comment type="catalytic activity">
    <reaction evidence="1">
        <text>sn-glycerol 3-phosphate + NADP(+) = dihydroxyacetone phosphate + NADPH + H(+)</text>
        <dbReference type="Rhea" id="RHEA:11096"/>
        <dbReference type="ChEBI" id="CHEBI:15378"/>
        <dbReference type="ChEBI" id="CHEBI:57597"/>
        <dbReference type="ChEBI" id="CHEBI:57642"/>
        <dbReference type="ChEBI" id="CHEBI:57783"/>
        <dbReference type="ChEBI" id="CHEBI:58349"/>
        <dbReference type="EC" id="1.1.1.94"/>
    </reaction>
    <physiologicalReaction direction="right-to-left" evidence="1">
        <dbReference type="Rhea" id="RHEA:11098"/>
    </physiologicalReaction>
</comment>
<comment type="pathway">
    <text evidence="1">Membrane lipid metabolism; glycerophospholipid metabolism.</text>
</comment>
<comment type="subcellular location">
    <subcellularLocation>
        <location evidence="1">Cytoplasm</location>
    </subcellularLocation>
</comment>
<comment type="similarity">
    <text evidence="1">Belongs to the NAD-dependent glycerol-3-phosphate dehydrogenase family.</text>
</comment>
<sequence>MSRVGIIGAGSWGTALSLVLANNGHSVEIWSIVESEIEMLKEKHEHIDKLPGVKLPDSITFTTDIEETIKNNDILVLAVPSVFTRSTAVKMAPFVKEGQIIVCVAKGIEENTLMTISDVVESEIPCADVAVMCGPSHAEEVGRLLPTTVVAGARTQKTAEIVQDLFMNEVFRVYTSPDVLGMELGGSLKNVIALAAGMADGLGYGDNTKAALITRGIAEISVLAIEMGAKAETLFGLTGIGDLIVTCESRHSRNRKAGMLIGQGYTMDEATKEVKMVVEGIYSAKAALALAEKYDVRMPIIEEVNRVLFEDKPAKEAVSELMLRDRKIEHSSLEWK</sequence>
<protein>
    <recommendedName>
        <fullName evidence="1">Glycerol-3-phosphate dehydrogenase [NAD(P)+]</fullName>
        <ecNumber evidence="1">1.1.1.94</ecNumber>
    </recommendedName>
    <alternativeName>
        <fullName evidence="1">NAD(P)(+)-dependent glycerol-3-phosphate dehydrogenase</fullName>
    </alternativeName>
    <alternativeName>
        <fullName evidence="1">NAD(P)H-dependent dihydroxyacetone-phosphate reductase</fullName>
    </alternativeName>
</protein>
<proteinExistence type="inferred from homology"/>
<keyword id="KW-0963">Cytoplasm</keyword>
<keyword id="KW-0444">Lipid biosynthesis</keyword>
<keyword id="KW-0443">Lipid metabolism</keyword>
<keyword id="KW-0520">NAD</keyword>
<keyword id="KW-0521">NADP</keyword>
<keyword id="KW-0547">Nucleotide-binding</keyword>
<keyword id="KW-0560">Oxidoreductase</keyword>
<keyword id="KW-0594">Phospholipid biosynthesis</keyword>
<keyword id="KW-1208">Phospholipid metabolism</keyword>
<accession>C4ZD61</accession>